<keyword id="KW-0997">Cell inner membrane</keyword>
<keyword id="KW-1003">Cell membrane</keyword>
<keyword id="KW-0285">Flavoprotein</keyword>
<keyword id="KW-0288">FMN</keyword>
<keyword id="KW-0406">Ion transport</keyword>
<keyword id="KW-0472">Membrane</keyword>
<keyword id="KW-0520">NAD</keyword>
<keyword id="KW-0597">Phosphoprotein</keyword>
<keyword id="KW-0915">Sodium</keyword>
<keyword id="KW-0739">Sodium transport</keyword>
<keyword id="KW-1278">Translocase</keyword>
<keyword id="KW-0812">Transmembrane</keyword>
<keyword id="KW-1133">Transmembrane helix</keyword>
<keyword id="KW-0813">Transport</keyword>
<keyword id="KW-0830">Ubiquinone</keyword>
<feature type="chain" id="PRO_0000074447" description="Na(+)-translocating NADH-quinone reductase subunit B">
    <location>
        <begin position="1"/>
        <end position="414"/>
    </location>
</feature>
<feature type="transmembrane region" description="Helical" evidence="1">
    <location>
        <begin position="23"/>
        <end position="40"/>
    </location>
</feature>
<feature type="transmembrane region" description="Helical" evidence="1">
    <location>
        <begin position="56"/>
        <end position="76"/>
    </location>
</feature>
<feature type="transmembrane region" description="Helical" evidence="1">
    <location>
        <begin position="129"/>
        <end position="149"/>
    </location>
</feature>
<feature type="transmembrane region" description="Helical" evidence="1">
    <location>
        <begin position="164"/>
        <end position="184"/>
    </location>
</feature>
<feature type="transmembrane region" description="Helical" evidence="1">
    <location>
        <begin position="268"/>
        <end position="288"/>
    </location>
</feature>
<feature type="transmembrane region" description="Helical" evidence="1">
    <location>
        <begin position="297"/>
        <end position="317"/>
    </location>
</feature>
<feature type="transmembrane region" description="Helical" evidence="1">
    <location>
        <begin position="322"/>
        <end position="342"/>
    </location>
</feature>
<feature type="transmembrane region" description="Helical" evidence="1">
    <location>
        <begin position="358"/>
        <end position="378"/>
    </location>
</feature>
<feature type="transmembrane region" description="Helical" evidence="1">
    <location>
        <begin position="381"/>
        <end position="401"/>
    </location>
</feature>
<feature type="modified residue" description="FMN phosphoryl threonine" evidence="1">
    <location>
        <position position="236"/>
    </location>
</feature>
<gene>
    <name evidence="1" type="primary">nqrB</name>
    <name type="ordered locus">VV1_1822</name>
</gene>
<accession>Q8DBJ5</accession>
<comment type="function">
    <text evidence="1">NQR complex catalyzes the reduction of ubiquinone-1 to ubiquinol by two successive reactions, coupled with the transport of Na(+) ions from the cytoplasm to the periplasm. NqrA to NqrE are probably involved in the second step, the conversion of ubisemiquinone to ubiquinol.</text>
</comment>
<comment type="catalytic activity">
    <reaction evidence="1">
        <text>a ubiquinone + n Na(+)(in) + NADH + H(+) = a ubiquinol + n Na(+)(out) + NAD(+)</text>
        <dbReference type="Rhea" id="RHEA:47748"/>
        <dbReference type="Rhea" id="RHEA-COMP:9565"/>
        <dbReference type="Rhea" id="RHEA-COMP:9566"/>
        <dbReference type="ChEBI" id="CHEBI:15378"/>
        <dbReference type="ChEBI" id="CHEBI:16389"/>
        <dbReference type="ChEBI" id="CHEBI:17976"/>
        <dbReference type="ChEBI" id="CHEBI:29101"/>
        <dbReference type="ChEBI" id="CHEBI:57540"/>
        <dbReference type="ChEBI" id="CHEBI:57945"/>
        <dbReference type="EC" id="7.2.1.1"/>
    </reaction>
</comment>
<comment type="cofactor">
    <cofactor evidence="1">
        <name>FMN</name>
        <dbReference type="ChEBI" id="CHEBI:58210"/>
    </cofactor>
</comment>
<comment type="subunit">
    <text evidence="1">Composed of six subunits; NqrA, NqrB, NqrC, NqrD, NqrE and NqrF.</text>
</comment>
<comment type="subcellular location">
    <subcellularLocation>
        <location evidence="1">Cell inner membrane</location>
        <topology evidence="1">Multi-pass membrane protein</topology>
    </subcellularLocation>
</comment>
<comment type="similarity">
    <text evidence="1">Belongs to the NqrB/RnfD family.</text>
</comment>
<reference key="1">
    <citation type="submission" date="2002-12" db="EMBL/GenBank/DDBJ databases">
        <title>Complete genome sequence of Vibrio vulnificus CMCP6.</title>
        <authorList>
            <person name="Rhee J.H."/>
            <person name="Kim S.Y."/>
            <person name="Chung S.S."/>
            <person name="Kim J.J."/>
            <person name="Moon Y.H."/>
            <person name="Jeong H."/>
            <person name="Choy H.E."/>
        </authorList>
    </citation>
    <scope>NUCLEOTIDE SEQUENCE [LARGE SCALE GENOMIC DNA]</scope>
    <source>
        <strain>CMCP6</strain>
    </source>
</reference>
<protein>
    <recommendedName>
        <fullName evidence="1">Na(+)-translocating NADH-quinone reductase subunit B</fullName>
        <shortName evidence="1">Na(+)-NQR subunit B</shortName>
        <shortName evidence="1">Na(+)-translocating NQR subunit B</shortName>
        <ecNumber evidence="1">7.2.1.1</ecNumber>
    </recommendedName>
    <alternativeName>
        <fullName evidence="1">NQR complex subunit B</fullName>
    </alternativeName>
    <alternativeName>
        <fullName evidence="1">NQR-1 subunit B</fullName>
    </alternativeName>
</protein>
<sequence>MGLKKFLEDIEHHFEPGGKHEKWFALYEAAATLFYTPGLVTKKSSHVRDSVDLKRIMIMVWFAVFPAMFWGMYNAGGQAIAALNHMYAGDQLAQIIAGNWHYWLTEMLGGTISADASWGSKMLLGATYFLPIYATVFLVGGFWEVLFCMVRKHEVNEGFFVTSILFALIVPPTLPLWQAALGITFGVVVAKEIFGGTGRNFLNPALAGRAFLFFAYPAQISGDVVWTAADGFSGATALSQWAQGGNSALVNTVTGAPITWLDAFIGNIPGSIGEVSTLALLIGAAMIVYMRIASWRIIAGVMIGMIVVSTLFNVIGSDTNAMFSMPWHWHLVLGGFAFGMFFMATDPVSASFTNKGKWWYGILIGAMCVMIRVVNPAYPEGMMLAILFANLFAPLFDHLVVEKNIKRRQARYGK</sequence>
<proteinExistence type="inferred from homology"/>
<organism>
    <name type="scientific">Vibrio vulnificus (strain CMCP6)</name>
    <dbReference type="NCBI Taxonomy" id="216895"/>
    <lineage>
        <taxon>Bacteria</taxon>
        <taxon>Pseudomonadati</taxon>
        <taxon>Pseudomonadota</taxon>
        <taxon>Gammaproteobacteria</taxon>
        <taxon>Vibrionales</taxon>
        <taxon>Vibrionaceae</taxon>
        <taxon>Vibrio</taxon>
    </lineage>
</organism>
<evidence type="ECO:0000255" key="1">
    <source>
        <dbReference type="HAMAP-Rule" id="MF_00426"/>
    </source>
</evidence>
<dbReference type="EC" id="7.2.1.1" evidence="1"/>
<dbReference type="EMBL" id="AE016795">
    <property type="protein sequence ID" value="AAO10228.1"/>
    <property type="molecule type" value="Genomic_DNA"/>
</dbReference>
<dbReference type="RefSeq" id="WP_011079728.1">
    <property type="nucleotide sequence ID" value="NC_004459.3"/>
</dbReference>
<dbReference type="SMR" id="Q8DBJ5"/>
<dbReference type="KEGG" id="vvu:VV1_1822"/>
<dbReference type="HOGENOM" id="CLU_042020_1_1_6"/>
<dbReference type="Proteomes" id="UP000002275">
    <property type="component" value="Chromosome 1"/>
</dbReference>
<dbReference type="GO" id="GO:0005886">
    <property type="term" value="C:plasma membrane"/>
    <property type="evidence" value="ECO:0007669"/>
    <property type="project" value="UniProtKB-SubCell"/>
</dbReference>
<dbReference type="GO" id="GO:0010181">
    <property type="term" value="F:FMN binding"/>
    <property type="evidence" value="ECO:0007669"/>
    <property type="project" value="InterPro"/>
</dbReference>
<dbReference type="GO" id="GO:0016655">
    <property type="term" value="F:oxidoreductase activity, acting on NAD(P)H, quinone or similar compound as acceptor"/>
    <property type="evidence" value="ECO:0007669"/>
    <property type="project" value="UniProtKB-UniRule"/>
</dbReference>
<dbReference type="GO" id="GO:0022904">
    <property type="term" value="P:respiratory electron transport chain"/>
    <property type="evidence" value="ECO:0007669"/>
    <property type="project" value="InterPro"/>
</dbReference>
<dbReference type="GO" id="GO:0006814">
    <property type="term" value="P:sodium ion transport"/>
    <property type="evidence" value="ECO:0007669"/>
    <property type="project" value="UniProtKB-UniRule"/>
</dbReference>
<dbReference type="GO" id="GO:0055085">
    <property type="term" value="P:transmembrane transport"/>
    <property type="evidence" value="ECO:0007669"/>
    <property type="project" value="InterPro"/>
</dbReference>
<dbReference type="HAMAP" id="MF_00426">
    <property type="entry name" value="NqrB"/>
    <property type="match status" value="1"/>
</dbReference>
<dbReference type="InterPro" id="IPR010966">
    <property type="entry name" value="NqrB"/>
</dbReference>
<dbReference type="InterPro" id="IPR004338">
    <property type="entry name" value="NqrB/RnfD"/>
</dbReference>
<dbReference type="NCBIfam" id="TIGR01937">
    <property type="entry name" value="nqrB"/>
    <property type="match status" value="1"/>
</dbReference>
<dbReference type="NCBIfam" id="NF003756">
    <property type="entry name" value="PRK05349.1"/>
    <property type="match status" value="1"/>
</dbReference>
<dbReference type="PANTHER" id="PTHR30578">
    <property type="entry name" value="ELECTRON TRANSPORT COMPLEX PROTEIN RNFD"/>
    <property type="match status" value="1"/>
</dbReference>
<dbReference type="PANTHER" id="PTHR30578:SF1">
    <property type="entry name" value="NA(+)-TRANSLOCATING NADH-QUINONE REDUCTASE SUBUNIT B"/>
    <property type="match status" value="1"/>
</dbReference>
<dbReference type="Pfam" id="PF03116">
    <property type="entry name" value="NQR2_RnfD_RnfE"/>
    <property type="match status" value="1"/>
</dbReference>
<dbReference type="PIRSF" id="PIRSF016055">
    <property type="entry name" value="NADH-UbQ_OxRdtase_B_su"/>
    <property type="match status" value="1"/>
</dbReference>
<name>NQRB_VIBVU</name>